<accession>Q60BA7</accession>
<sequence>MINDIQKRTAERMQKSIEALKHEFAKIRTGRAHPSLLEHIRVSYYGNEVPLTQVANVAVEDARSLAVTPWERNMVQAIEKAIMTSDLGLNPSTAGTVIRVPLPPLTEERRRDLIKVVRQEAENGRVAIRNIRRDANNELKAALKEKLISEDEDRRSQEQIQKTTDQFIKEIDKLLEQKEADLLAV</sequence>
<reference key="1">
    <citation type="journal article" date="2004" name="PLoS Biol.">
        <title>Genomic insights into methanotrophy: the complete genome sequence of Methylococcus capsulatus (Bath).</title>
        <authorList>
            <person name="Ward N.L."/>
            <person name="Larsen O."/>
            <person name="Sakwa J."/>
            <person name="Bruseth L."/>
            <person name="Khouri H.M."/>
            <person name="Durkin A.S."/>
            <person name="Dimitrov G."/>
            <person name="Jiang L."/>
            <person name="Scanlan D."/>
            <person name="Kang K.H."/>
            <person name="Lewis M.R."/>
            <person name="Nelson K.E."/>
            <person name="Methe B.A."/>
            <person name="Wu M."/>
            <person name="Heidelberg J.F."/>
            <person name="Paulsen I.T."/>
            <person name="Fouts D.E."/>
            <person name="Ravel J."/>
            <person name="Tettelin H."/>
            <person name="Ren Q."/>
            <person name="Read T.D."/>
            <person name="DeBoy R.T."/>
            <person name="Seshadri R."/>
            <person name="Salzberg S.L."/>
            <person name="Jensen H.B."/>
            <person name="Birkeland N.K."/>
            <person name="Nelson W.C."/>
            <person name="Dodson R.J."/>
            <person name="Grindhaug S.H."/>
            <person name="Holt I.E."/>
            <person name="Eidhammer I."/>
            <person name="Jonasen I."/>
            <person name="Vanaken S."/>
            <person name="Utterback T.R."/>
            <person name="Feldblyum T.V."/>
            <person name="Fraser C.M."/>
            <person name="Lillehaug J.R."/>
            <person name="Eisen J.A."/>
        </authorList>
    </citation>
    <scope>NUCLEOTIDE SEQUENCE [LARGE SCALE GENOMIC DNA]</scope>
    <source>
        <strain>ATCC 33009 / NCIMB 11132 / Bath</strain>
    </source>
</reference>
<dbReference type="EMBL" id="AE017282">
    <property type="protein sequence ID" value="AAU93240.1"/>
    <property type="molecule type" value="Genomic_DNA"/>
</dbReference>
<dbReference type="RefSeq" id="WP_010959918.1">
    <property type="nucleotide sequence ID" value="NC_002977.6"/>
</dbReference>
<dbReference type="SMR" id="Q60BA7"/>
<dbReference type="STRING" id="243233.MCA0570"/>
<dbReference type="GeneID" id="88222902"/>
<dbReference type="KEGG" id="mca:MCA0570"/>
<dbReference type="eggNOG" id="COG0233">
    <property type="taxonomic scope" value="Bacteria"/>
</dbReference>
<dbReference type="HOGENOM" id="CLU_073981_2_1_6"/>
<dbReference type="Proteomes" id="UP000006821">
    <property type="component" value="Chromosome"/>
</dbReference>
<dbReference type="GO" id="GO:0005829">
    <property type="term" value="C:cytosol"/>
    <property type="evidence" value="ECO:0007669"/>
    <property type="project" value="GOC"/>
</dbReference>
<dbReference type="GO" id="GO:0043023">
    <property type="term" value="F:ribosomal large subunit binding"/>
    <property type="evidence" value="ECO:0007669"/>
    <property type="project" value="TreeGrafter"/>
</dbReference>
<dbReference type="GO" id="GO:0002184">
    <property type="term" value="P:cytoplasmic translational termination"/>
    <property type="evidence" value="ECO:0007669"/>
    <property type="project" value="TreeGrafter"/>
</dbReference>
<dbReference type="CDD" id="cd00520">
    <property type="entry name" value="RRF"/>
    <property type="match status" value="1"/>
</dbReference>
<dbReference type="FunFam" id="1.10.132.20:FF:000001">
    <property type="entry name" value="Ribosome-recycling factor"/>
    <property type="match status" value="1"/>
</dbReference>
<dbReference type="FunFam" id="3.30.1360.40:FF:000001">
    <property type="entry name" value="Ribosome-recycling factor"/>
    <property type="match status" value="1"/>
</dbReference>
<dbReference type="Gene3D" id="3.30.1360.40">
    <property type="match status" value="1"/>
</dbReference>
<dbReference type="Gene3D" id="1.10.132.20">
    <property type="entry name" value="Ribosome-recycling factor"/>
    <property type="match status" value="1"/>
</dbReference>
<dbReference type="HAMAP" id="MF_00040">
    <property type="entry name" value="RRF"/>
    <property type="match status" value="1"/>
</dbReference>
<dbReference type="InterPro" id="IPR002661">
    <property type="entry name" value="Ribosome_recyc_fac"/>
</dbReference>
<dbReference type="InterPro" id="IPR023584">
    <property type="entry name" value="Ribosome_recyc_fac_dom"/>
</dbReference>
<dbReference type="InterPro" id="IPR036191">
    <property type="entry name" value="RRF_sf"/>
</dbReference>
<dbReference type="NCBIfam" id="TIGR00496">
    <property type="entry name" value="frr"/>
    <property type="match status" value="1"/>
</dbReference>
<dbReference type="PANTHER" id="PTHR20982:SF3">
    <property type="entry name" value="MITOCHONDRIAL RIBOSOME RECYCLING FACTOR PSEUDO 1"/>
    <property type="match status" value="1"/>
</dbReference>
<dbReference type="PANTHER" id="PTHR20982">
    <property type="entry name" value="RIBOSOME RECYCLING FACTOR"/>
    <property type="match status" value="1"/>
</dbReference>
<dbReference type="Pfam" id="PF01765">
    <property type="entry name" value="RRF"/>
    <property type="match status" value="1"/>
</dbReference>
<dbReference type="SUPFAM" id="SSF55194">
    <property type="entry name" value="Ribosome recycling factor, RRF"/>
    <property type="match status" value="1"/>
</dbReference>
<gene>
    <name evidence="1" type="primary">frr</name>
    <name type="ordered locus">MCA0570</name>
</gene>
<keyword id="KW-0963">Cytoplasm</keyword>
<keyword id="KW-0648">Protein biosynthesis</keyword>
<keyword id="KW-1185">Reference proteome</keyword>
<comment type="function">
    <text evidence="1">Responsible for the release of ribosomes from messenger RNA at the termination of protein biosynthesis. May increase the efficiency of translation by recycling ribosomes from one round of translation to another.</text>
</comment>
<comment type="subcellular location">
    <subcellularLocation>
        <location evidence="1">Cytoplasm</location>
    </subcellularLocation>
</comment>
<comment type="similarity">
    <text evidence="1">Belongs to the RRF family.</text>
</comment>
<evidence type="ECO:0000255" key="1">
    <source>
        <dbReference type="HAMAP-Rule" id="MF_00040"/>
    </source>
</evidence>
<name>RRF_METCA</name>
<organism>
    <name type="scientific">Methylococcus capsulatus (strain ATCC 33009 / NCIMB 11132 / Bath)</name>
    <dbReference type="NCBI Taxonomy" id="243233"/>
    <lineage>
        <taxon>Bacteria</taxon>
        <taxon>Pseudomonadati</taxon>
        <taxon>Pseudomonadota</taxon>
        <taxon>Gammaproteobacteria</taxon>
        <taxon>Methylococcales</taxon>
        <taxon>Methylococcaceae</taxon>
        <taxon>Methylococcus</taxon>
    </lineage>
</organism>
<protein>
    <recommendedName>
        <fullName evidence="1">Ribosome-recycling factor</fullName>
        <shortName evidence="1">RRF</shortName>
    </recommendedName>
    <alternativeName>
        <fullName evidence="1">Ribosome-releasing factor</fullName>
    </alternativeName>
</protein>
<feature type="chain" id="PRO_0000167489" description="Ribosome-recycling factor">
    <location>
        <begin position="1"/>
        <end position="185"/>
    </location>
</feature>
<proteinExistence type="inferred from homology"/>